<protein>
    <recommendedName>
        <fullName>UDP-galactose transporter homolog 1</fullName>
    </recommendedName>
    <alternativeName>
        <fullName>Multicopy suppressor of leflunomide-sensitivity protein 6</fullName>
    </alternativeName>
</protein>
<keyword id="KW-0256">Endoplasmic reticulum</keyword>
<keyword id="KW-0325">Glycoprotein</keyword>
<keyword id="KW-0472">Membrane</keyword>
<keyword id="KW-1185">Reference proteome</keyword>
<keyword id="KW-0762">Sugar transport</keyword>
<keyword id="KW-0812">Transmembrane</keyword>
<keyword id="KW-1133">Transmembrane helix</keyword>
<keyword id="KW-0813">Transport</keyword>
<reference key="1">
    <citation type="journal article" date="1997" name="Nature">
        <title>The nucleotide sequence of Saccharomyces cerevisiae chromosome XVI.</title>
        <authorList>
            <person name="Bussey H."/>
            <person name="Storms R.K."/>
            <person name="Ahmed A."/>
            <person name="Albermann K."/>
            <person name="Allen E."/>
            <person name="Ansorge W."/>
            <person name="Araujo R."/>
            <person name="Aparicio A."/>
            <person name="Barrell B.G."/>
            <person name="Badcock K."/>
            <person name="Benes V."/>
            <person name="Botstein D."/>
            <person name="Bowman S."/>
            <person name="Brueckner M."/>
            <person name="Carpenter J."/>
            <person name="Cherry J.M."/>
            <person name="Chung E."/>
            <person name="Churcher C.M."/>
            <person name="Coster F."/>
            <person name="Davis K."/>
            <person name="Davis R.W."/>
            <person name="Dietrich F.S."/>
            <person name="Delius H."/>
            <person name="DiPaolo T."/>
            <person name="Dubois E."/>
            <person name="Duesterhoeft A."/>
            <person name="Duncan M."/>
            <person name="Floeth M."/>
            <person name="Fortin N."/>
            <person name="Friesen J.D."/>
            <person name="Fritz C."/>
            <person name="Goffeau A."/>
            <person name="Hall J."/>
            <person name="Hebling U."/>
            <person name="Heumann K."/>
            <person name="Hilbert H."/>
            <person name="Hillier L.W."/>
            <person name="Hunicke-Smith S."/>
            <person name="Hyman R.W."/>
            <person name="Johnston M."/>
            <person name="Kalman S."/>
            <person name="Kleine K."/>
            <person name="Komp C."/>
            <person name="Kurdi O."/>
            <person name="Lashkari D."/>
            <person name="Lew H."/>
            <person name="Lin A."/>
            <person name="Lin D."/>
            <person name="Louis E.J."/>
            <person name="Marathe R."/>
            <person name="Messenguy F."/>
            <person name="Mewes H.-W."/>
            <person name="Mirtipati S."/>
            <person name="Moestl D."/>
            <person name="Mueller-Auer S."/>
            <person name="Namath A."/>
            <person name="Nentwich U."/>
            <person name="Oefner P."/>
            <person name="Pearson D."/>
            <person name="Petel F.X."/>
            <person name="Pohl T.M."/>
            <person name="Purnelle B."/>
            <person name="Rajandream M.A."/>
            <person name="Rechmann S."/>
            <person name="Rieger M."/>
            <person name="Riles L."/>
            <person name="Roberts D."/>
            <person name="Schaefer M."/>
            <person name="Scharfe M."/>
            <person name="Scherens B."/>
            <person name="Schramm S."/>
            <person name="Schroeder M."/>
            <person name="Sdicu A.-M."/>
            <person name="Tettelin H."/>
            <person name="Urrestarazu L.A."/>
            <person name="Ushinsky S."/>
            <person name="Vierendeels F."/>
            <person name="Vissers S."/>
            <person name="Voss H."/>
            <person name="Walsh S.V."/>
            <person name="Wambutt R."/>
            <person name="Wang Y."/>
            <person name="Wedler E."/>
            <person name="Wedler H."/>
            <person name="Winnett E."/>
            <person name="Zhong W.-W."/>
            <person name="Zollner A."/>
            <person name="Vo D.H."/>
            <person name="Hani J."/>
        </authorList>
    </citation>
    <scope>NUCLEOTIDE SEQUENCE [LARGE SCALE GENOMIC DNA]</scope>
    <source>
        <strain>ATCC 204508 / S288c</strain>
    </source>
</reference>
<reference key="2">
    <citation type="journal article" date="2014" name="G3 (Bethesda)">
        <title>The reference genome sequence of Saccharomyces cerevisiae: Then and now.</title>
        <authorList>
            <person name="Engel S.R."/>
            <person name="Dietrich F.S."/>
            <person name="Fisk D.G."/>
            <person name="Binkley G."/>
            <person name="Balakrishnan R."/>
            <person name="Costanzo M.C."/>
            <person name="Dwight S.S."/>
            <person name="Hitz B.C."/>
            <person name="Karra K."/>
            <person name="Nash R.S."/>
            <person name="Weng S."/>
            <person name="Wong E.D."/>
            <person name="Lloyd P."/>
            <person name="Skrzypek M.S."/>
            <person name="Miyasato S.R."/>
            <person name="Simison M."/>
            <person name="Cherry J.M."/>
        </authorList>
    </citation>
    <scope>GENOME REANNOTATION</scope>
    <source>
        <strain>ATCC 204508 / S288c</strain>
    </source>
</reference>
<reference key="3">
    <citation type="journal article" date="2007" name="Genome Res.">
        <title>Approaching a complete repository of sequence-verified protein-encoding clones for Saccharomyces cerevisiae.</title>
        <authorList>
            <person name="Hu Y."/>
            <person name="Rolfs A."/>
            <person name="Bhullar B."/>
            <person name="Murthy T.V.S."/>
            <person name="Zhu C."/>
            <person name="Berger M.F."/>
            <person name="Camargo A.A."/>
            <person name="Kelley F."/>
            <person name="McCarron S."/>
            <person name="Jepson D."/>
            <person name="Richardson A."/>
            <person name="Raphael J."/>
            <person name="Moreira D."/>
            <person name="Taycher E."/>
            <person name="Zuo D."/>
            <person name="Mohr S."/>
            <person name="Kane M.F."/>
            <person name="Williamson J."/>
            <person name="Simpson A.J.G."/>
            <person name="Bulyk M.L."/>
            <person name="Harlow E."/>
            <person name="Marsischky G."/>
            <person name="Kolodner R.D."/>
            <person name="LaBaer J."/>
        </authorList>
    </citation>
    <scope>NUCLEOTIDE SEQUENCE [GENOMIC DNA]</scope>
    <source>
        <strain>ATCC 204508 / S288c</strain>
    </source>
</reference>
<reference key="4">
    <citation type="journal article" date="2001" name="Curr. Microbiol.">
        <title>The Saccharomyces cerevisiae MLF6/YPL244C gene, which encodes a possible yeast homologue of mammalian UDP-galactose transporter, confers resistance to the immunosuppressive drug, leflunomide.</title>
        <authorList>
            <person name="Fujimura H."/>
        </authorList>
    </citation>
    <scope>FUNCTION</scope>
</reference>
<reference key="5">
    <citation type="journal article" date="2001" name="Yeast">
        <title>Overexpression of HUT1 gene stimulates in vivo galactosylation by enhancing UDP-galactose transport activity in Saccharomyces cerevisiae.</title>
        <authorList>
            <person name="Kainuma M."/>
            <person name="Chiba Y."/>
            <person name="Takeuchi M."/>
            <person name="Jigami Y."/>
        </authorList>
    </citation>
    <scope>FUNCTION</scope>
</reference>
<reference key="6">
    <citation type="journal article" date="2001" name="Yeast">
        <title>Hut1 proteins identified in Saccharomyces cerevisiae and Schizosaccharomyces pombe are functional homologues involved in the protein-folding process at the endoplasmic reticulum.</title>
        <authorList>
            <person name="Nakanishi H."/>
            <person name="Nakayama K."/>
            <person name="Yokota A."/>
            <person name="Tachikawa H."/>
            <person name="Takahashi N."/>
            <person name="Jigami Y."/>
        </authorList>
    </citation>
    <scope>FUNCTION</scope>
    <scope>SUBCELLULAR LOCATION</scope>
</reference>
<reference key="7">
    <citation type="journal article" date="2006" name="Proc. Natl. Acad. Sci. U.S.A.">
        <title>A global topology map of the Saccharomyces cerevisiae membrane proteome.</title>
        <authorList>
            <person name="Kim H."/>
            <person name="Melen K."/>
            <person name="Oesterberg M."/>
            <person name="von Heijne G."/>
        </authorList>
    </citation>
    <scope>TOPOLOGY [LARGE SCALE ANALYSIS]</scope>
    <source>
        <strain>ATCC 208353 / W303-1A</strain>
    </source>
</reference>
<organism>
    <name type="scientific">Saccharomyces cerevisiae (strain ATCC 204508 / S288c)</name>
    <name type="common">Baker's yeast</name>
    <dbReference type="NCBI Taxonomy" id="559292"/>
    <lineage>
        <taxon>Eukaryota</taxon>
        <taxon>Fungi</taxon>
        <taxon>Dikarya</taxon>
        <taxon>Ascomycota</taxon>
        <taxon>Saccharomycotina</taxon>
        <taxon>Saccharomycetes</taxon>
        <taxon>Saccharomycetales</taxon>
        <taxon>Saccharomycetaceae</taxon>
        <taxon>Saccharomyces</taxon>
    </lineage>
</organism>
<dbReference type="EMBL" id="Z67751">
    <property type="protein sequence ID" value="CAA91600.1"/>
    <property type="molecule type" value="Genomic_DNA"/>
</dbReference>
<dbReference type="EMBL" id="Z73600">
    <property type="protein sequence ID" value="CAA97965.1"/>
    <property type="molecule type" value="Genomic_DNA"/>
</dbReference>
<dbReference type="EMBL" id="AY692836">
    <property type="protein sequence ID" value="AAT92855.1"/>
    <property type="molecule type" value="Genomic_DNA"/>
</dbReference>
<dbReference type="EMBL" id="BK006949">
    <property type="protein sequence ID" value="DAA11193.1"/>
    <property type="molecule type" value="Genomic_DNA"/>
</dbReference>
<dbReference type="PIR" id="S61020">
    <property type="entry name" value="S61020"/>
</dbReference>
<dbReference type="RefSeq" id="NP_015080.1">
    <property type="nucleotide sequence ID" value="NM_001184058.1"/>
</dbReference>
<dbReference type="SMR" id="Q12520"/>
<dbReference type="BioGRID" id="35919">
    <property type="interactions" value="94"/>
</dbReference>
<dbReference type="DIP" id="DIP-3958N"/>
<dbReference type="FunCoup" id="Q12520">
    <property type="interactions" value="548"/>
</dbReference>
<dbReference type="IntAct" id="Q12520">
    <property type="interactions" value="1"/>
</dbReference>
<dbReference type="MINT" id="Q12520"/>
<dbReference type="STRING" id="4932.YPL244C"/>
<dbReference type="TCDB" id="2.A.7.11.6">
    <property type="family name" value="the drug/metabolite transporter (dmt) superfamily"/>
</dbReference>
<dbReference type="GlyCosmos" id="Q12520">
    <property type="glycosylation" value="1 site, No reported glycans"/>
</dbReference>
<dbReference type="GlyGen" id="Q12520">
    <property type="glycosylation" value="1 site"/>
</dbReference>
<dbReference type="PaxDb" id="4932-YPL244C"/>
<dbReference type="PeptideAtlas" id="Q12520"/>
<dbReference type="EnsemblFungi" id="YPL244C_mRNA">
    <property type="protein sequence ID" value="YPL244C"/>
    <property type="gene ID" value="YPL244C"/>
</dbReference>
<dbReference type="GeneID" id="855832"/>
<dbReference type="KEGG" id="sce:YPL244C"/>
<dbReference type="AGR" id="SGD:S000006165"/>
<dbReference type="SGD" id="S000006165">
    <property type="gene designation" value="HUT1"/>
</dbReference>
<dbReference type="VEuPathDB" id="FungiDB:YPL244C"/>
<dbReference type="eggNOG" id="KOG1581">
    <property type="taxonomic scope" value="Eukaryota"/>
</dbReference>
<dbReference type="GeneTree" id="ENSGT00940000157900"/>
<dbReference type="HOGENOM" id="CLU_036019_0_2_1"/>
<dbReference type="InParanoid" id="Q12520"/>
<dbReference type="OMA" id="CGAIGQV"/>
<dbReference type="OrthoDB" id="1601at2759"/>
<dbReference type="BioCyc" id="YEAST:G3O-34130-MONOMER"/>
<dbReference type="BioGRID-ORCS" id="855832">
    <property type="hits" value="4 hits in 10 CRISPR screens"/>
</dbReference>
<dbReference type="PRO" id="PR:Q12520"/>
<dbReference type="Proteomes" id="UP000002311">
    <property type="component" value="Chromosome XVI"/>
</dbReference>
<dbReference type="RNAct" id="Q12520">
    <property type="molecule type" value="protein"/>
</dbReference>
<dbReference type="GO" id="GO:0005783">
    <property type="term" value="C:endoplasmic reticulum"/>
    <property type="evidence" value="ECO:0007005"/>
    <property type="project" value="SGD"/>
</dbReference>
<dbReference type="GO" id="GO:0005789">
    <property type="term" value="C:endoplasmic reticulum membrane"/>
    <property type="evidence" value="ECO:0000318"/>
    <property type="project" value="GO_Central"/>
</dbReference>
<dbReference type="GO" id="GO:0000139">
    <property type="term" value="C:Golgi membrane"/>
    <property type="evidence" value="ECO:0000318"/>
    <property type="project" value="GO_Central"/>
</dbReference>
<dbReference type="GO" id="GO:0005459">
    <property type="term" value="F:UDP-galactose transmembrane transporter activity"/>
    <property type="evidence" value="ECO:0000250"/>
    <property type="project" value="SGD"/>
</dbReference>
<dbReference type="GO" id="GO:0005460">
    <property type="term" value="F:UDP-glucose transmembrane transporter activity"/>
    <property type="evidence" value="ECO:0000318"/>
    <property type="project" value="GO_Central"/>
</dbReference>
<dbReference type="GO" id="GO:0072334">
    <property type="term" value="P:UDP-galactose transmembrane transport"/>
    <property type="evidence" value="ECO:0000315"/>
    <property type="project" value="SGD"/>
</dbReference>
<dbReference type="GO" id="GO:0015786">
    <property type="term" value="P:UDP-glucose transmembrane transport"/>
    <property type="evidence" value="ECO:0000315"/>
    <property type="project" value="SGD"/>
</dbReference>
<dbReference type="InterPro" id="IPR013657">
    <property type="entry name" value="SCL35B1-4/HUT1"/>
</dbReference>
<dbReference type="PANTHER" id="PTHR10778">
    <property type="entry name" value="SOLUTE CARRIER FAMILY 35 MEMBER B"/>
    <property type="match status" value="1"/>
</dbReference>
<dbReference type="PANTHER" id="PTHR10778:SF10">
    <property type="entry name" value="SOLUTE CARRIER FAMILY 35 MEMBER B1"/>
    <property type="match status" value="1"/>
</dbReference>
<dbReference type="Pfam" id="PF08449">
    <property type="entry name" value="UAA"/>
    <property type="match status" value="1"/>
</dbReference>
<dbReference type="SUPFAM" id="SSF103481">
    <property type="entry name" value="Multidrug resistance efflux transporter EmrE"/>
    <property type="match status" value="1"/>
</dbReference>
<sequence length="339" mass="38075">MAGSTSSLVICAIGIYATFLTWALVQEPLATRTWPNSMGKFQFPNVISLIQASVAMMMGYLYLNWKKVEYPPRKMIKDHWKQLMLISFTQSSSGPLATTSLKHVDYLTYMLAKSCKMIPVLLVHLLLYRTPIASQKKVVALLVSLGVTIFTIGGNDGKKLKRSFNESGNDNKLQGFGLLFSSLFLDGLTNATQDKLLKANKAKEKGKQTLITGAHLMFTLNLFVILWNILYFIVIDCKQWDNAVSVLTMDPQVWGYLMLYSFCGAMGQCFIFYTLEQFGSLVLIMITVTRKMVSMILSIIVFGKSVRFQQWVGMFIVFGGITWEALNKKKANIPKAKSA</sequence>
<name>HUT1_YEAST</name>
<feature type="chain" id="PRO_0000213414" description="UDP-galactose transporter homolog 1">
    <location>
        <begin position="1"/>
        <end position="339"/>
    </location>
</feature>
<feature type="topological domain" description="Lumenal" evidence="1">
    <location>
        <begin position="1"/>
        <end position="4"/>
    </location>
</feature>
<feature type="transmembrane region" description="Helical" evidence="1">
    <location>
        <begin position="5"/>
        <end position="25"/>
    </location>
</feature>
<feature type="topological domain" description="Cytoplasmic" evidence="1">
    <location>
        <begin position="26"/>
        <end position="42"/>
    </location>
</feature>
<feature type="transmembrane region" description="Helical" evidence="1">
    <location>
        <begin position="43"/>
        <end position="63"/>
    </location>
</feature>
<feature type="topological domain" description="Lumenal" evidence="1">
    <location>
        <begin position="64"/>
        <end position="106"/>
    </location>
</feature>
<feature type="transmembrane region" description="Helical" evidence="1">
    <location>
        <begin position="107"/>
        <end position="127"/>
    </location>
</feature>
<feature type="topological domain" description="Cytoplasmic" evidence="1">
    <location>
        <begin position="128"/>
        <end position="136"/>
    </location>
</feature>
<feature type="transmembrane region" description="Helical" evidence="1">
    <location>
        <begin position="137"/>
        <end position="157"/>
    </location>
</feature>
<feature type="topological domain" description="Lumenal" evidence="1">
    <location>
        <begin position="158"/>
        <end position="174"/>
    </location>
</feature>
<feature type="transmembrane region" description="Helical" evidence="1">
    <location>
        <begin position="175"/>
        <end position="192"/>
    </location>
</feature>
<feature type="topological domain" description="Cytoplasmic" evidence="1">
    <location>
        <begin position="193"/>
        <end position="214"/>
    </location>
</feature>
<feature type="transmembrane region" description="Helical" evidence="1">
    <location>
        <begin position="215"/>
        <end position="235"/>
    </location>
</feature>
<feature type="topological domain" description="Lumenal" evidence="1">
    <location>
        <begin position="236"/>
        <end position="245"/>
    </location>
</feature>
<feature type="transmembrane region" description="Helical" evidence="1">
    <location>
        <begin position="246"/>
        <end position="266"/>
    </location>
</feature>
<feature type="topological domain" description="Cytoplasmic" evidence="1">
    <location>
        <begin position="267"/>
        <end position="280"/>
    </location>
</feature>
<feature type="transmembrane region" description="Helical" evidence="1">
    <location>
        <begin position="281"/>
        <end position="303"/>
    </location>
</feature>
<feature type="topological domain" description="Lumenal" evidence="1">
    <location>
        <begin position="304"/>
        <end position="307"/>
    </location>
</feature>
<feature type="transmembrane region" description="Helical" evidence="1">
    <location>
        <begin position="308"/>
        <end position="327"/>
    </location>
</feature>
<feature type="topological domain" description="Cytoplasmic" evidence="1">
    <location>
        <begin position="328"/>
        <end position="339"/>
    </location>
</feature>
<feature type="glycosylation site" description="N-linked (GlcNAc...) asparagine" evidence="1">
    <location>
        <position position="165"/>
    </location>
</feature>
<accession>Q12520</accession>
<accession>D6W3C7</accession>
<evidence type="ECO:0000255" key="1"/>
<evidence type="ECO:0000269" key="2">
    <source>
    </source>
</evidence>
<evidence type="ECO:0000269" key="3">
    <source>
    </source>
</evidence>
<evidence type="ECO:0000269" key="4">
    <source>
    </source>
</evidence>
<evidence type="ECO:0000305" key="5"/>
<comment type="function">
    <text evidence="2 3 4">May be involved in specific transport of UDP-Gal from the cytosol to the Golgi lumen. Involved in the maintenance of optimal conditions for the folding of secretory pathway proteins in the endoplasmic reticulum. Overexpression confers resistance to the immunosuppressive drug, leflunomide.</text>
</comment>
<comment type="subcellular location">
    <subcellularLocation>
        <location evidence="3">Endoplasmic reticulum membrane</location>
        <topology evidence="3">Multi-pass membrane protein</topology>
    </subcellularLocation>
</comment>
<comment type="similarity">
    <text evidence="5">Belongs to the nucleotide-sugar transporter family. SLC35B subfamily.</text>
</comment>
<proteinExistence type="evidence at protein level"/>
<gene>
    <name type="primary">HUT1</name>
    <name type="synonym">MLF6</name>
    <name type="ordered locus">YPL244C</name>
</gene>